<comment type="function">
    <text evidence="1">Binds directly to 23S rRNA. The L1 stalk is quite mobile in the ribosome, and is involved in E site tRNA release.</text>
</comment>
<comment type="function">
    <text evidence="1">Protein L1 is also a translational repressor protein, it controls the translation of the L11 operon by binding to its mRNA.</text>
</comment>
<comment type="subunit">
    <text evidence="1">Part of the 50S ribosomal subunit.</text>
</comment>
<comment type="similarity">
    <text evidence="1">Belongs to the universal ribosomal protein uL1 family.</text>
</comment>
<evidence type="ECO:0000255" key="1">
    <source>
        <dbReference type="HAMAP-Rule" id="MF_01318"/>
    </source>
</evidence>
<evidence type="ECO:0000305" key="2"/>
<keyword id="KW-0678">Repressor</keyword>
<keyword id="KW-0687">Ribonucleoprotein</keyword>
<keyword id="KW-0689">Ribosomal protein</keyword>
<keyword id="KW-0694">RNA-binding</keyword>
<keyword id="KW-0699">rRNA-binding</keyword>
<keyword id="KW-0810">Translation regulation</keyword>
<keyword id="KW-0820">tRNA-binding</keyword>
<organism>
    <name type="scientific">Marinobacter nauticus (strain ATCC 700491 / DSM 11845 / VT8)</name>
    <name type="common">Marinobacter aquaeolei</name>
    <dbReference type="NCBI Taxonomy" id="351348"/>
    <lineage>
        <taxon>Bacteria</taxon>
        <taxon>Pseudomonadati</taxon>
        <taxon>Pseudomonadota</taxon>
        <taxon>Gammaproteobacteria</taxon>
        <taxon>Pseudomonadales</taxon>
        <taxon>Marinobacteraceae</taxon>
        <taxon>Marinobacter</taxon>
    </lineage>
</organism>
<name>RL1_MARN8</name>
<gene>
    <name evidence="1" type="primary">rplA</name>
    <name type="ordered locus">Maqu_0709</name>
</gene>
<feature type="chain" id="PRO_0000308044" description="Large ribosomal subunit protein uL1">
    <location>
        <begin position="1"/>
        <end position="232"/>
    </location>
</feature>
<dbReference type="EMBL" id="CP000514">
    <property type="protein sequence ID" value="ABM17806.1"/>
    <property type="molecule type" value="Genomic_DNA"/>
</dbReference>
<dbReference type="RefSeq" id="WP_011784238.1">
    <property type="nucleotide sequence ID" value="NC_008740.1"/>
</dbReference>
<dbReference type="SMR" id="A1TYI7"/>
<dbReference type="STRING" id="351348.Maqu_0709"/>
<dbReference type="KEGG" id="maq:Maqu_0709"/>
<dbReference type="eggNOG" id="COG0081">
    <property type="taxonomic scope" value="Bacteria"/>
</dbReference>
<dbReference type="HOGENOM" id="CLU_062853_0_0_6"/>
<dbReference type="OrthoDB" id="9803740at2"/>
<dbReference type="Proteomes" id="UP000000998">
    <property type="component" value="Chromosome"/>
</dbReference>
<dbReference type="GO" id="GO:0022625">
    <property type="term" value="C:cytosolic large ribosomal subunit"/>
    <property type="evidence" value="ECO:0007669"/>
    <property type="project" value="TreeGrafter"/>
</dbReference>
<dbReference type="GO" id="GO:0019843">
    <property type="term" value="F:rRNA binding"/>
    <property type="evidence" value="ECO:0007669"/>
    <property type="project" value="UniProtKB-UniRule"/>
</dbReference>
<dbReference type="GO" id="GO:0003735">
    <property type="term" value="F:structural constituent of ribosome"/>
    <property type="evidence" value="ECO:0007669"/>
    <property type="project" value="InterPro"/>
</dbReference>
<dbReference type="GO" id="GO:0000049">
    <property type="term" value="F:tRNA binding"/>
    <property type="evidence" value="ECO:0007669"/>
    <property type="project" value="UniProtKB-KW"/>
</dbReference>
<dbReference type="GO" id="GO:0006417">
    <property type="term" value="P:regulation of translation"/>
    <property type="evidence" value="ECO:0007669"/>
    <property type="project" value="UniProtKB-KW"/>
</dbReference>
<dbReference type="GO" id="GO:0006412">
    <property type="term" value="P:translation"/>
    <property type="evidence" value="ECO:0007669"/>
    <property type="project" value="UniProtKB-UniRule"/>
</dbReference>
<dbReference type="CDD" id="cd00403">
    <property type="entry name" value="Ribosomal_L1"/>
    <property type="match status" value="1"/>
</dbReference>
<dbReference type="FunFam" id="3.40.50.790:FF:000001">
    <property type="entry name" value="50S ribosomal protein L1"/>
    <property type="match status" value="1"/>
</dbReference>
<dbReference type="Gene3D" id="3.30.190.20">
    <property type="match status" value="1"/>
</dbReference>
<dbReference type="Gene3D" id="3.40.50.790">
    <property type="match status" value="1"/>
</dbReference>
<dbReference type="HAMAP" id="MF_01318_B">
    <property type="entry name" value="Ribosomal_uL1_B"/>
    <property type="match status" value="1"/>
</dbReference>
<dbReference type="InterPro" id="IPR005878">
    <property type="entry name" value="Ribosom_uL1_bac-type"/>
</dbReference>
<dbReference type="InterPro" id="IPR002143">
    <property type="entry name" value="Ribosomal_uL1"/>
</dbReference>
<dbReference type="InterPro" id="IPR023674">
    <property type="entry name" value="Ribosomal_uL1-like"/>
</dbReference>
<dbReference type="InterPro" id="IPR028364">
    <property type="entry name" value="Ribosomal_uL1/biogenesis"/>
</dbReference>
<dbReference type="InterPro" id="IPR016095">
    <property type="entry name" value="Ribosomal_uL1_3-a/b-sand"/>
</dbReference>
<dbReference type="InterPro" id="IPR023673">
    <property type="entry name" value="Ribosomal_uL1_CS"/>
</dbReference>
<dbReference type="NCBIfam" id="TIGR01169">
    <property type="entry name" value="rplA_bact"/>
    <property type="match status" value="1"/>
</dbReference>
<dbReference type="PANTHER" id="PTHR36427">
    <property type="entry name" value="54S RIBOSOMAL PROTEIN L1, MITOCHONDRIAL"/>
    <property type="match status" value="1"/>
</dbReference>
<dbReference type="PANTHER" id="PTHR36427:SF3">
    <property type="entry name" value="LARGE RIBOSOMAL SUBUNIT PROTEIN UL1M"/>
    <property type="match status" value="1"/>
</dbReference>
<dbReference type="Pfam" id="PF00687">
    <property type="entry name" value="Ribosomal_L1"/>
    <property type="match status" value="1"/>
</dbReference>
<dbReference type="PIRSF" id="PIRSF002155">
    <property type="entry name" value="Ribosomal_L1"/>
    <property type="match status" value="1"/>
</dbReference>
<dbReference type="SUPFAM" id="SSF56808">
    <property type="entry name" value="Ribosomal protein L1"/>
    <property type="match status" value="1"/>
</dbReference>
<dbReference type="PROSITE" id="PS01199">
    <property type="entry name" value="RIBOSOMAL_L1"/>
    <property type="match status" value="1"/>
</dbReference>
<protein>
    <recommendedName>
        <fullName evidence="1">Large ribosomal subunit protein uL1</fullName>
    </recommendedName>
    <alternativeName>
        <fullName evidence="2">50S ribosomal protein L1</fullName>
    </alternativeName>
</protein>
<reference key="1">
    <citation type="journal article" date="2011" name="Appl. Environ. Microbiol.">
        <title>Genomic potential of Marinobacter aquaeolei, a biogeochemical 'opportunitroph'.</title>
        <authorList>
            <person name="Singer E."/>
            <person name="Webb E.A."/>
            <person name="Nelson W.C."/>
            <person name="Heidelberg J.F."/>
            <person name="Ivanova N."/>
            <person name="Pati A."/>
            <person name="Edwards K.J."/>
        </authorList>
    </citation>
    <scope>NUCLEOTIDE SEQUENCE [LARGE SCALE GENOMIC DNA]</scope>
    <source>
        <strain>ATCC 700491 / DSM 11845 / VT8</strain>
    </source>
</reference>
<proteinExistence type="inferred from homology"/>
<sequence>MAKLSKRQKLIREKVDSTRAYSVDEAVALLAELGQNVKFKESVDVAVNLGVDARKSDQVVRSSTVLPHGTGKTVRVAVFTQGANAEKATAAGADVVGMDDLADEVKKGNMDFDVVIATPDAMRVVGQLGQILGPRGLMPNPKVGTVTADVETAVKNAKAGQVRYRTDKNGIIHAPLGNVEFSAQNIKENLEALVADLKKAKPASSKGVYLKKITISSTMGPGLTIDQGTLSI</sequence>
<accession>A1TYI7</accession>